<protein>
    <recommendedName>
        <fullName>Chloride channel protein 2</fullName>
        <shortName>ClC-2</shortName>
    </recommendedName>
</protein>
<dbReference type="EMBL" id="AF113528">
    <property type="protein sequence ID" value="AAD37111.1"/>
    <property type="molecule type" value="Genomic_DNA"/>
</dbReference>
<dbReference type="EMBL" id="AF113528">
    <property type="protein sequence ID" value="AAD37112.1"/>
    <property type="molecule type" value="Genomic_DNA"/>
</dbReference>
<dbReference type="EMBL" id="AF113529">
    <property type="protein sequence ID" value="AAD37113.1"/>
    <property type="molecule type" value="mRNA"/>
</dbReference>
<dbReference type="EMBL" id="AF113530">
    <property type="protein sequence ID" value="AAD37114.1"/>
    <property type="molecule type" value="mRNA"/>
</dbReference>
<dbReference type="SMR" id="Q9WU45"/>
<dbReference type="FunCoup" id="Q9WU45">
    <property type="interactions" value="59"/>
</dbReference>
<dbReference type="STRING" id="10141.ENSCPOP00000008262"/>
<dbReference type="eggNOG" id="KOG0476">
    <property type="taxonomic scope" value="Eukaryota"/>
</dbReference>
<dbReference type="InParanoid" id="Q9WU45"/>
<dbReference type="Proteomes" id="UP000005447">
    <property type="component" value="Unassembled WGS sequence"/>
</dbReference>
<dbReference type="GO" id="GO:0030424">
    <property type="term" value="C:axon"/>
    <property type="evidence" value="ECO:0007669"/>
    <property type="project" value="UniProtKB-SubCell"/>
</dbReference>
<dbReference type="GO" id="GO:0016323">
    <property type="term" value="C:basolateral plasma membrane"/>
    <property type="evidence" value="ECO:0007669"/>
    <property type="project" value="UniProtKB-SubCell"/>
</dbReference>
<dbReference type="GO" id="GO:0034707">
    <property type="term" value="C:chloride channel complex"/>
    <property type="evidence" value="ECO:0007669"/>
    <property type="project" value="UniProtKB-KW"/>
</dbReference>
<dbReference type="GO" id="GO:0032591">
    <property type="term" value="C:dendritic spine membrane"/>
    <property type="evidence" value="ECO:0007669"/>
    <property type="project" value="UniProtKB-SubCell"/>
</dbReference>
<dbReference type="GO" id="GO:0005886">
    <property type="term" value="C:plasma membrane"/>
    <property type="evidence" value="ECO:0000250"/>
    <property type="project" value="UniProtKB"/>
</dbReference>
<dbReference type="GO" id="GO:0045211">
    <property type="term" value="C:postsynaptic membrane"/>
    <property type="evidence" value="ECO:0007669"/>
    <property type="project" value="UniProtKB-KW"/>
</dbReference>
<dbReference type="GO" id="GO:0005247">
    <property type="term" value="F:voltage-gated chloride channel activity"/>
    <property type="evidence" value="ECO:0000250"/>
    <property type="project" value="UniProtKB"/>
</dbReference>
<dbReference type="GO" id="GO:0032347">
    <property type="term" value="P:regulation of aldosterone biosynthetic process"/>
    <property type="evidence" value="ECO:0000250"/>
    <property type="project" value="UniProtKB"/>
</dbReference>
<dbReference type="CDD" id="cd04591">
    <property type="entry name" value="CBS_pair_voltage-gated_CLC_euk_bac"/>
    <property type="match status" value="1"/>
</dbReference>
<dbReference type="CDD" id="cd03683">
    <property type="entry name" value="ClC_1_like"/>
    <property type="match status" value="1"/>
</dbReference>
<dbReference type="FunFam" id="1.10.3080.10:FF:000002">
    <property type="entry name" value="Chloride channel 2c"/>
    <property type="match status" value="1"/>
</dbReference>
<dbReference type="FunFam" id="3.10.580.10:FF:000024">
    <property type="entry name" value="Chloride channel 2c"/>
    <property type="match status" value="1"/>
</dbReference>
<dbReference type="FunFam" id="3.10.580.10:FF:000019">
    <property type="entry name" value="Chloride voltage-gated channel 2"/>
    <property type="match status" value="1"/>
</dbReference>
<dbReference type="Gene3D" id="3.10.580.10">
    <property type="entry name" value="CBS-domain"/>
    <property type="match status" value="2"/>
</dbReference>
<dbReference type="Gene3D" id="1.10.3080.10">
    <property type="entry name" value="Clc chloride channel"/>
    <property type="match status" value="1"/>
</dbReference>
<dbReference type="InterPro" id="IPR046342">
    <property type="entry name" value="CBS_dom_sf"/>
</dbReference>
<dbReference type="InterPro" id="IPR002244">
    <property type="entry name" value="Cl-channel-2"/>
</dbReference>
<dbReference type="InterPro" id="IPR014743">
    <property type="entry name" value="Cl-channel_core"/>
</dbReference>
<dbReference type="InterPro" id="IPR050970">
    <property type="entry name" value="Cl_channel_volt-gated"/>
</dbReference>
<dbReference type="InterPro" id="IPR001807">
    <property type="entry name" value="ClC"/>
</dbReference>
<dbReference type="PANTHER" id="PTHR45720">
    <property type="entry name" value="CHLORIDE CHANNEL PROTEIN 2"/>
    <property type="match status" value="1"/>
</dbReference>
<dbReference type="PANTHER" id="PTHR45720:SF6">
    <property type="entry name" value="CHLORIDE CHANNEL PROTEIN 2"/>
    <property type="match status" value="1"/>
</dbReference>
<dbReference type="Pfam" id="PF00654">
    <property type="entry name" value="Voltage_CLC"/>
    <property type="match status" value="1"/>
</dbReference>
<dbReference type="PRINTS" id="PR00762">
    <property type="entry name" value="CLCHANNEL"/>
</dbReference>
<dbReference type="PRINTS" id="PR01113">
    <property type="entry name" value="CLCHANNEL2"/>
</dbReference>
<dbReference type="SUPFAM" id="SSF54631">
    <property type="entry name" value="CBS-domain pair"/>
    <property type="match status" value="1"/>
</dbReference>
<dbReference type="SUPFAM" id="SSF81340">
    <property type="entry name" value="Clc chloride channel"/>
    <property type="match status" value="1"/>
</dbReference>
<dbReference type="PROSITE" id="PS51371">
    <property type="entry name" value="CBS"/>
    <property type="match status" value="2"/>
</dbReference>
<feature type="chain" id="PRO_0000094432" description="Chloride channel protein 2">
    <location>
        <begin position="1"/>
        <end position="902"/>
    </location>
</feature>
<feature type="topological domain" description="Cytoplasmic" evidence="1">
    <location>
        <begin position="1"/>
        <end position="89"/>
    </location>
</feature>
<feature type="transmembrane region" description="Helical" evidence="1">
    <location>
        <begin position="90"/>
        <end position="123"/>
    </location>
</feature>
<feature type="transmembrane region" description="Helical" evidence="1">
    <location>
        <begin position="132"/>
        <end position="157"/>
    </location>
</feature>
<feature type="intramembrane region" description="Helical" evidence="1">
    <location>
        <begin position="166"/>
        <end position="173"/>
    </location>
</feature>
<feature type="transmembrane region" description="Helical" evidence="1">
    <location>
        <begin position="182"/>
        <end position="200"/>
    </location>
</feature>
<feature type="transmembrane region" description="Helical" evidence="1">
    <location>
        <begin position="207"/>
        <end position="225"/>
    </location>
</feature>
<feature type="intramembrane region" description="Helical" evidence="1">
    <location>
        <begin position="241"/>
        <end position="253"/>
    </location>
</feature>
<feature type="intramembrane region" description="Helical" evidence="1">
    <location>
        <begin position="257"/>
        <end position="265"/>
    </location>
</feature>
<feature type="transmembrane region" description="Helical" evidence="1">
    <location>
        <begin position="277"/>
        <end position="297"/>
    </location>
</feature>
<feature type="transmembrane region" description="Helical" evidence="1">
    <location>
        <begin position="323"/>
        <end position="351"/>
    </location>
</feature>
<feature type="transmembrane region" description="Helical" evidence="1">
    <location>
        <begin position="360"/>
        <end position="379"/>
    </location>
</feature>
<feature type="transmembrane region" description="Helical" evidence="1">
    <location>
        <begin position="431"/>
        <end position="451"/>
    </location>
</feature>
<feature type="transmembrane region" description="Helical" evidence="1">
    <location>
        <begin position="459"/>
        <end position="482"/>
    </location>
</feature>
<feature type="intramembrane region" description="Helical" evidence="1">
    <location>
        <begin position="499"/>
        <end position="513"/>
    </location>
</feature>
<feature type="intramembrane region" description="Note=Loop between two helices" evidence="1">
    <location>
        <begin position="514"/>
        <end position="515"/>
    </location>
</feature>
<feature type="intramembrane region" description="Helical" evidence="1">
    <location>
        <begin position="516"/>
        <end position="527"/>
    </location>
</feature>
<feature type="intramembrane region" description="Note=Loop between two helices" evidence="1">
    <location>
        <begin position="528"/>
        <end position="532"/>
    </location>
</feature>
<feature type="transmembrane region" description="Helical" evidence="1">
    <location>
        <begin position="533"/>
        <end position="550"/>
    </location>
</feature>
<feature type="topological domain" description="Cytoplasmic" evidence="1">
    <location>
        <begin position="551"/>
        <end position="902"/>
    </location>
</feature>
<feature type="domain" description="CBS 1" evidence="6">
    <location>
        <begin position="586"/>
        <end position="644"/>
    </location>
</feature>
<feature type="domain" description="CBS 2" evidence="6">
    <location>
        <begin position="794"/>
        <end position="854"/>
    </location>
</feature>
<feature type="region of interest" description="Essential for channel gating by both voltage and cell volume" evidence="2">
    <location>
        <begin position="18"/>
        <end position="36"/>
    </location>
</feature>
<feature type="region of interest" description="Modulates channel gating by both voltage and cell volume" evidence="2">
    <location>
        <begin position="38"/>
        <end position="51"/>
    </location>
</feature>
<feature type="region of interest" description="Disordered" evidence="7">
    <location>
        <begin position="648"/>
        <end position="748"/>
    </location>
</feature>
<feature type="region of interest" description="Disordered" evidence="7">
    <location>
        <begin position="860"/>
        <end position="902"/>
    </location>
</feature>
<feature type="short sequence motif" description="Selectivity filter part_1" evidence="1">
    <location>
        <begin position="163"/>
        <end position="167"/>
    </location>
</feature>
<feature type="short sequence motif" description="Selectivity filter part_2" evidence="1">
    <location>
        <begin position="205"/>
        <end position="209"/>
    </location>
</feature>
<feature type="short sequence motif" description="Selectivity filter part_3" evidence="1">
    <location>
        <begin position="459"/>
        <end position="463"/>
    </location>
</feature>
<feature type="short sequence motif" description="Basolateral membrane sorting" evidence="3">
    <location>
        <begin position="816"/>
        <end position="817"/>
    </location>
</feature>
<feature type="compositionally biased region" description="Polar residues" evidence="7">
    <location>
        <begin position="671"/>
        <end position="683"/>
    </location>
</feature>
<feature type="compositionally biased region" description="Polar residues" evidence="7">
    <location>
        <begin position="706"/>
        <end position="719"/>
    </location>
</feature>
<feature type="site" description="Protopore gate" evidence="3">
    <location>
        <position position="207"/>
    </location>
</feature>
<feature type="site" description="Couples extracellular acidification to the channel closure" evidence="8">
    <location>
        <position position="532"/>
    </location>
</feature>
<feature type="modified residue" description="Phosphothreonine" evidence="4">
    <location>
        <position position="22"/>
    </location>
</feature>
<feature type="splice variant" id="VSP_001041" description="In isoform 2." evidence="9">
    <original>I</original>
    <variation>M</variation>
    <location>
        <position position="76"/>
    </location>
</feature>
<feature type="splice variant" id="VSP_001042" description="In isoform 2." evidence="9">
    <location>
        <begin position="77"/>
        <end position="86"/>
    </location>
</feature>
<feature type="mutagenesis site" description="Has normal channel gating upon extracellular acidification." evidence="8">
    <original>E</original>
    <variation>V</variation>
    <location>
        <position position="207"/>
    </location>
</feature>
<feature type="mutagenesis site" description="Loss of inhibition at acidic pH." evidence="8">
    <original>H</original>
    <variation>F</variation>
    <location>
        <position position="532"/>
    </location>
</feature>
<feature type="sequence conflict" description="In Ref. 1; AAD37114." evidence="9" ref="1">
    <original>S</original>
    <variation>A</variation>
    <location>
        <position position="283"/>
    </location>
</feature>
<evidence type="ECO:0000250" key="1"/>
<evidence type="ECO:0000250" key="2">
    <source>
        <dbReference type="UniProtKB" id="P35525"/>
    </source>
</evidence>
<evidence type="ECO:0000250" key="3">
    <source>
        <dbReference type="UniProtKB" id="P51788"/>
    </source>
</evidence>
<evidence type="ECO:0000250" key="4">
    <source>
        <dbReference type="UniProtKB" id="Q9R0A1"/>
    </source>
</evidence>
<evidence type="ECO:0000255" key="5"/>
<evidence type="ECO:0000255" key="6">
    <source>
        <dbReference type="PROSITE-ProRule" id="PRU00703"/>
    </source>
</evidence>
<evidence type="ECO:0000256" key="7">
    <source>
        <dbReference type="SAM" id="MobiDB-lite"/>
    </source>
</evidence>
<evidence type="ECO:0000269" key="8">
    <source>
    </source>
</evidence>
<evidence type="ECO:0000305" key="9"/>
<sequence length="902" mass="98888">MAASAAAAGEGMEPRALQYEQTLMYGRYTQELGAFAKEEAARIRLGGPEPWKGPPSPRVPPELLEYGQSRCAPCCICSVRCHKFLVSRVGEDWIFLVLLGLLMALVSWAMDYAIAVCLQAQQWMSQGLNTNILLQYLAWVTYPVVLITFSAGFTQILAPQAVGSGIPEMKTILRGVVLKEYLTLKTFVAKVIGLTCALGSGMPLGKEGPFVHIASMCASLLSKFLSLFGGIYENESRNTEMLAAACAVGVGCCFAAPIGGVLFSIEVTSTFFAVRNYWRGFFSATFSAFIFRVLAVWNRDEETITALFKTRFRLDFPFDLQELPAFAVIGIASGFGGALFVYLNRKIVQVMRKQKTINRFLMRKRLLFPALVTLLISTLTFPPGFGQFMAGQLSQKETLVTLFDNRTWVHQGLVEEQEPPSTSQAWNPPRANVFLTLVIFILMKFWMSALATTIPVPCGAFMPVFVIGAAFGRLVGESMAAWFPDGIHTDGSTYRIVPGGYAVVGAAALAGAVTHTVSTAVIVFELTGQIAHILPVMIAVILANAVAQSLQPSLYDSIIRIKKLPYLPELGWGRHQQYRVRVEDIMVRDVPYVALNCTFRDLRLALHRTKGRMLALVESSESMILLGSIERSQVVTLLGAQLSAARRRQHIQERRKAQMSPPSDQDGLPSPESSVHFQVNTEDSAFIPARGETHKPLKPALKRGPSNASKAGETSTGSMESAGIALRSLFCGSPPPEATSDLEKPESCERRKLKRVRISLANDADLEGEMSPEEILEWEEQQLNEPVNFSDCKIDPAPFQLVERTSLHKTHTIFSLLGVDHAYVTSIGRLIGIVTLKELRKAIEGSVTAQGVKVRPPLASFRDSATSSSDTETTEVHALWGPHSCHGLPRDGSPSDSDDKCQ</sequence>
<keyword id="KW-0025">Alternative splicing</keyword>
<keyword id="KW-0129">CBS domain</keyword>
<keyword id="KW-1003">Cell membrane</keyword>
<keyword id="KW-0966">Cell projection</keyword>
<keyword id="KW-0868">Chloride</keyword>
<keyword id="KW-0869">Chloride channel</keyword>
<keyword id="KW-0407">Ion channel</keyword>
<keyword id="KW-0406">Ion transport</keyword>
<keyword id="KW-0472">Membrane</keyword>
<keyword id="KW-0597">Phosphoprotein</keyword>
<keyword id="KW-0628">Postsynaptic cell membrane</keyword>
<keyword id="KW-1185">Reference proteome</keyword>
<keyword id="KW-0677">Repeat</keyword>
<keyword id="KW-0770">Synapse</keyword>
<keyword id="KW-0812">Transmembrane</keyword>
<keyword id="KW-1133">Transmembrane helix</keyword>
<keyword id="KW-0813">Transport</keyword>
<keyword id="KW-0851">Voltage-gated channel</keyword>
<proteinExistence type="evidence at protein level"/>
<accession>Q9WU45</accession>
<accession>Q9R247</accession>
<accession>Q9R248</accession>
<accession>Q9WU46</accession>
<gene>
    <name type="primary">CLCN2</name>
</gene>
<comment type="function">
    <text evidence="2 3 4 8">Voltage-gated and osmosensitive chloride channel. Forms a homodimeric channel where each subunit has its own ion conduction pathway. Conducts double-barreled currents controlled by two types of gates, two fast glutamate gates that control each subunit independently and a slow common gate that opens and shuts off both subunits simultaneously. Displays inward rectification currents activated upon membrane hyperpolarization and extracellular hypotonicity (By similarity) (PubMed:19153159). Contributes to chloride conductance involved in neuron excitability. In hippocampal neurons, generates a significant part of resting membrane conductance and provides an additional chloride efflux pathway to prevent chloride accumulation in dendrites upon GABA receptor activation. In glia, associates with the auxiliary subunit HEPACAM/GlialCAM at astrocytic processes and myelinated fiber tracts where it may regulate transcellular chloride flux buffering extracellular chloride and potassium concentrations (By similarity). Regulates aldosterone production in adrenal glands. The opening of CLCN2 channels at hyperpolarized membrane potentials in the glomerulosa causes cell membrane depolarization, activation of voltage-gated calcium channels and increased expression of aldosterone synthase, the rate-limiting enzyme for aldosterone biosynthesis (By similarity). Contributes to chloride conductance in retinal pigment epithelium involved in phagocytosis of shed photoreceptor outer segments and photoreceptor renewal (By similarity). Conducts chloride currents at the basolateral membrane of epithelial cells with a role in chloride reabsorption rather than secretion. Permeable to small monovalent anions with chloride &gt; thiocyanate &gt; bromide &gt; nitrate &gt; iodide ion selectivity (By similarity).</text>
</comment>
<comment type="catalytic activity">
    <reaction evidence="8">
        <text>chloride(in) = chloride(out)</text>
        <dbReference type="Rhea" id="RHEA:29823"/>
        <dbReference type="ChEBI" id="CHEBI:17996"/>
    </reaction>
</comment>
<comment type="catalytic activity">
    <reaction evidence="4">
        <text>thiocyanate(in) = thiocyanate(out)</text>
        <dbReference type="Rhea" id="RHEA:75347"/>
        <dbReference type="ChEBI" id="CHEBI:18022"/>
    </reaction>
</comment>
<comment type="catalytic activity">
    <reaction evidence="2 4">
        <text>bromide(in) = bromide(out)</text>
        <dbReference type="Rhea" id="RHEA:75383"/>
        <dbReference type="ChEBI" id="CHEBI:15858"/>
    </reaction>
</comment>
<comment type="catalytic activity">
    <reaction evidence="2">
        <text>nitrate(in) = nitrate(out)</text>
        <dbReference type="Rhea" id="RHEA:34923"/>
        <dbReference type="ChEBI" id="CHEBI:17632"/>
    </reaction>
</comment>
<comment type="catalytic activity">
    <reaction evidence="2 4">
        <text>iodide(out) = iodide(in)</text>
        <dbReference type="Rhea" id="RHEA:66324"/>
        <dbReference type="ChEBI" id="CHEBI:16382"/>
    </reaction>
</comment>
<comment type="activity regulation">
    <text evidence="2 3 4 8">Common gate kinetics are down-regulated by intracellular ATP. Inhibited by AK-42, a derivative of meclofenamate (By similarity). Inhibited by Cd(2+) (By similarity). Inhibited by Zn(2+) and PKC activation (By similarity). Inhibited at acidic pH (PubMed:19153159). CCLN2:HEPACAM channel conductance is up-regulated upon hypo-osmolarity (By similarity).</text>
</comment>
<comment type="subunit">
    <text evidence="3">Homodimer. Interacts with auxiliary subunit HEPACAM.</text>
</comment>
<comment type="subcellular location">
    <subcellularLocation>
        <location evidence="3">Cell membrane</location>
        <topology evidence="5">Multi-pass membrane protein</topology>
    </subcellularLocation>
    <subcellularLocation>
        <location evidence="3">Basolateral cell membrane</location>
        <topology evidence="5">Multi-pass membrane protein</topology>
    </subcellularLocation>
    <subcellularLocation>
        <location evidence="2">Cell projection</location>
        <location evidence="2">Dendritic spine membrane</location>
        <topology evidence="5">Multi-pass membrane protein</topology>
    </subcellularLocation>
    <subcellularLocation>
        <location evidence="2">Cell projection</location>
        <location evidence="2">Axon</location>
    </subcellularLocation>
    <text evidence="2 3 4">Sorting to the basolateral membrane is mediated by AP-1 clathrin adapter (By similarity). Localizes at axon initial segments and dendritic shaft and spikes. Colocalizes with HEPACAM and GFAP at astrocyte end-foot in contact with brain capillaries and other glial cells (By similarity).</text>
</comment>
<comment type="alternative products">
    <event type="alternative splicing"/>
    <isoform>
        <id>Q9WU45-1</id>
        <name>1</name>
        <sequence type="displayed"/>
    </isoform>
    <isoform>
        <id>Q9WU45-2</id>
        <name>2</name>
        <name>Delta77-86</name>
        <sequence type="described" ref="VSP_001041 VSP_001042"/>
    </isoform>
</comment>
<comment type="similarity">
    <text evidence="9">Belongs to the chloride channel (TC 2.A.49) family. ClC-2/CLCN2 subfamily.</text>
</comment>
<organism>
    <name type="scientific">Cavia porcellus</name>
    <name type="common">Guinea pig</name>
    <dbReference type="NCBI Taxonomy" id="10141"/>
    <lineage>
        <taxon>Eukaryota</taxon>
        <taxon>Metazoa</taxon>
        <taxon>Chordata</taxon>
        <taxon>Craniata</taxon>
        <taxon>Vertebrata</taxon>
        <taxon>Euteleostomi</taxon>
        <taxon>Mammalia</taxon>
        <taxon>Eutheria</taxon>
        <taxon>Euarchontoglires</taxon>
        <taxon>Glires</taxon>
        <taxon>Rodentia</taxon>
        <taxon>Hystricomorpha</taxon>
        <taxon>Caviidae</taxon>
        <taxon>Cavia</taxon>
    </lineage>
</organism>
<reference key="1">
    <citation type="journal article" date="2000" name="Am. J. Physiol.">
        <title>Splice variants of a ClC-2 chloride channel with differing functional characteristics.</title>
        <authorList>
            <person name="Cid L.P."/>
            <person name="Niemeyer M.I."/>
            <person name="Ramirez A."/>
            <person name="Sepulveda F.V."/>
        </authorList>
    </citation>
    <scope>NUCLEOTIDE SEQUENCE [GENOMIC DNA / MRNA]</scope>
    <scope>ALTERNATIVE SPLICING</scope>
    <source>
        <tissue>Small intestine</tissue>
    </source>
</reference>
<reference key="2">
    <citation type="journal article" date="2009" name="J. Physiol. (Lond.)">
        <title>Voltage-dependent and -independent titration of specific residues accounts for complex gating of a ClC chloride channel by extracellular protons.</title>
        <authorList>
            <person name="Niemeyer M.I."/>
            <person name="Cid L.P."/>
            <person name="Yusef Y.R."/>
            <person name="Briones R."/>
            <person name="Sepulveda F.V."/>
        </authorList>
    </citation>
    <scope>FUNCTION</scope>
    <scope>TRANSPORTER ACTIVITY</scope>
    <scope>ACTIVITY REGULATION</scope>
    <scope>MUTAGENESIS OF GLU-207 AND HIS-532</scope>
    <scope>SITE</scope>
</reference>
<name>CLCN2_CAVPO</name>